<gene>
    <name type="primary">FBP2</name>
</gene>
<comment type="function">
    <text>Probable transcription factor.</text>
</comment>
<comment type="interaction">
    <interactant intactId="EBI-531655">
        <id>Q03489</id>
    </interactant>
    <interactant intactId="EBI-532642">
        <id>Q40885</id>
        <label>AG1</label>
    </interactant>
    <organismsDiffer>false</organismsDiffer>
    <experiments>3</experiments>
</comment>
<comment type="interaction">
    <interactant intactId="EBI-531655">
        <id>Q03489</id>
    </interactant>
    <interactant intactId="EBI-531636">
        <id>Q40882</id>
        <label>fbp11</label>
    </interactant>
    <organismsDiffer>false</organismsDiffer>
    <experiments>8</experiments>
</comment>
<comment type="interaction">
    <interactant intactId="EBI-531655">
        <id>Q03489</id>
    </interactant>
    <interactant intactId="EBI-532455">
        <id>Q9ATE9</id>
        <label>FBP20</label>
    </interactant>
    <organismsDiffer>false</organismsDiffer>
    <experiments>4</experiments>
</comment>
<comment type="interaction">
    <interactant intactId="EBI-531655">
        <id>Q03489</id>
    </interactant>
    <interactant intactId="EBI-972007">
        <id>Q9ATE5</id>
        <label>FBP24</label>
    </interactant>
    <organismsDiffer>false</organismsDiffer>
    <experiments>5</experiments>
</comment>
<comment type="interaction">
    <interactant intactId="EBI-531655">
        <id>Q03489</id>
    </interactant>
    <interactant intactId="EBI-532471">
        <id>Q9ATE3</id>
        <label>FBP28</label>
    </interactant>
    <organismsDiffer>false</organismsDiffer>
    <experiments>3</experiments>
</comment>
<comment type="interaction">
    <interactant intactId="EBI-531655">
        <id>Q03489</id>
    </interactant>
    <interactant intactId="EBI-532434">
        <id>Q43616</id>
        <label>fbp7</label>
    </interactant>
    <organismsDiffer>false</organismsDiffer>
    <experiments>6</experiments>
</comment>
<comment type="subcellular location">
    <subcellularLocation>
        <location>Nucleus</location>
    </subcellularLocation>
</comment>
<feature type="chain" id="PRO_0000199469" description="Agamous-like MADS-box protein AGL9 homolog">
    <location>
        <begin position="1"/>
        <end position="241"/>
    </location>
</feature>
<feature type="domain" description="MADS-box" evidence="1">
    <location>
        <begin position="3"/>
        <end position="57"/>
    </location>
</feature>
<feature type="domain" description="K-box" evidence="2">
    <location>
        <begin position="89"/>
        <end position="179"/>
    </location>
</feature>
<dbReference type="EMBL" id="M91666">
    <property type="protein sequence ID" value="AAA86854.1"/>
    <property type="molecule type" value="mRNA"/>
</dbReference>
<dbReference type="PIR" id="JQ1690">
    <property type="entry name" value="JQ1690"/>
</dbReference>
<dbReference type="SMR" id="Q03489"/>
<dbReference type="IntAct" id="Q03489">
    <property type="interactions" value="13"/>
</dbReference>
<dbReference type="GO" id="GO:0005634">
    <property type="term" value="C:nucleus"/>
    <property type="evidence" value="ECO:0007669"/>
    <property type="project" value="UniProtKB-SubCell"/>
</dbReference>
<dbReference type="GO" id="GO:0003700">
    <property type="term" value="F:DNA-binding transcription factor activity"/>
    <property type="evidence" value="ECO:0007669"/>
    <property type="project" value="InterPro"/>
</dbReference>
<dbReference type="GO" id="GO:0046983">
    <property type="term" value="F:protein dimerization activity"/>
    <property type="evidence" value="ECO:0007669"/>
    <property type="project" value="InterPro"/>
</dbReference>
<dbReference type="GO" id="GO:0000977">
    <property type="term" value="F:RNA polymerase II transcription regulatory region sequence-specific DNA binding"/>
    <property type="evidence" value="ECO:0007669"/>
    <property type="project" value="InterPro"/>
</dbReference>
<dbReference type="GO" id="GO:0045944">
    <property type="term" value="P:positive regulation of transcription by RNA polymerase II"/>
    <property type="evidence" value="ECO:0007669"/>
    <property type="project" value="InterPro"/>
</dbReference>
<dbReference type="CDD" id="cd00265">
    <property type="entry name" value="MADS_MEF2_like"/>
    <property type="match status" value="1"/>
</dbReference>
<dbReference type="FunFam" id="3.40.1810.10:FF:000011">
    <property type="entry name" value="MADS-box transcription factor 7"/>
    <property type="match status" value="1"/>
</dbReference>
<dbReference type="Gene3D" id="3.40.1810.10">
    <property type="entry name" value="Transcription factor, MADS-box"/>
    <property type="match status" value="1"/>
</dbReference>
<dbReference type="InterPro" id="IPR050142">
    <property type="entry name" value="MADS-box/MEF2_TF"/>
</dbReference>
<dbReference type="InterPro" id="IPR033896">
    <property type="entry name" value="MEF2-like_N"/>
</dbReference>
<dbReference type="InterPro" id="IPR002487">
    <property type="entry name" value="TF_Kbox"/>
</dbReference>
<dbReference type="InterPro" id="IPR002100">
    <property type="entry name" value="TF_MADSbox"/>
</dbReference>
<dbReference type="InterPro" id="IPR036879">
    <property type="entry name" value="TF_MADSbox_sf"/>
</dbReference>
<dbReference type="PANTHER" id="PTHR48019">
    <property type="entry name" value="SERUM RESPONSE FACTOR HOMOLOG"/>
    <property type="match status" value="1"/>
</dbReference>
<dbReference type="Pfam" id="PF01486">
    <property type="entry name" value="K-box"/>
    <property type="match status" value="1"/>
</dbReference>
<dbReference type="Pfam" id="PF00319">
    <property type="entry name" value="SRF-TF"/>
    <property type="match status" value="1"/>
</dbReference>
<dbReference type="PRINTS" id="PR00404">
    <property type="entry name" value="MADSDOMAIN"/>
</dbReference>
<dbReference type="SMART" id="SM00432">
    <property type="entry name" value="MADS"/>
    <property type="match status" value="1"/>
</dbReference>
<dbReference type="SUPFAM" id="SSF55455">
    <property type="entry name" value="SRF-like"/>
    <property type="match status" value="1"/>
</dbReference>
<dbReference type="PROSITE" id="PS51297">
    <property type="entry name" value="K_BOX"/>
    <property type="match status" value="1"/>
</dbReference>
<dbReference type="PROSITE" id="PS00350">
    <property type="entry name" value="MADS_BOX_1"/>
    <property type="match status" value="1"/>
</dbReference>
<dbReference type="PROSITE" id="PS50066">
    <property type="entry name" value="MADS_BOX_2"/>
    <property type="match status" value="1"/>
</dbReference>
<proteinExistence type="evidence at protein level"/>
<sequence>MGRGRVELKRIENKINRQVTFAKRRNGLLKKAYELSVLCDAEVALIIFSNRGKLYEFCSSSSMLKTLERYQKCNYGAPETNISTREALEISSQQEYLKLKARYEALQRSQRNLLGEDLGPLNSKELESLERQLDMSLKQIRSTRTQLMLDQLQDLQRKEHALNEANRTLKQRLMEGSTLNLQWQQNAQDVGYGRQATQTQGDGFFHPLECEPTLQIGYQNDPITVGGAGPSVNNYMAGWLP</sequence>
<name>AGL9_PETHY</name>
<evidence type="ECO:0000255" key="1">
    <source>
        <dbReference type="PROSITE-ProRule" id="PRU00251"/>
    </source>
</evidence>
<evidence type="ECO:0000255" key="2">
    <source>
        <dbReference type="PROSITE-ProRule" id="PRU00629"/>
    </source>
</evidence>
<protein>
    <recommendedName>
        <fullName>Agamous-like MADS-box protein AGL9 homolog</fullName>
    </recommendedName>
    <alternativeName>
        <fullName>Floral homeotic protein FBP2</fullName>
    </alternativeName>
    <alternativeName>
        <fullName>Floral-binding protein 2</fullName>
    </alternativeName>
</protein>
<organism>
    <name type="scientific">Petunia hybrida</name>
    <name type="common">Petunia</name>
    <dbReference type="NCBI Taxonomy" id="4102"/>
    <lineage>
        <taxon>Eukaryota</taxon>
        <taxon>Viridiplantae</taxon>
        <taxon>Streptophyta</taxon>
        <taxon>Embryophyta</taxon>
        <taxon>Tracheophyta</taxon>
        <taxon>Spermatophyta</taxon>
        <taxon>Magnoliopsida</taxon>
        <taxon>eudicotyledons</taxon>
        <taxon>Gunneridae</taxon>
        <taxon>Pentapetalae</taxon>
        <taxon>asterids</taxon>
        <taxon>lamiids</taxon>
        <taxon>Solanales</taxon>
        <taxon>Solanaceae</taxon>
        <taxon>Petunioideae</taxon>
        <taxon>Petunia</taxon>
    </lineage>
</organism>
<reference key="1">
    <citation type="journal article" date="1992" name="Plant Cell">
        <title>Differential expression of two MADS box genes in wild-type and mutant petunia flowers.</title>
        <authorList>
            <person name="Angenent G.C."/>
            <person name="Busscher M."/>
            <person name="Franken J."/>
            <person name="Mol J.N.M."/>
            <person name="van Tunen A.J."/>
        </authorList>
    </citation>
    <scope>NUCLEOTIDE SEQUENCE [MRNA]</scope>
</reference>
<reference key="2">
    <citation type="submission" date="1992-12" db="EMBL/GenBank/DDBJ databases">
        <authorList>
            <person name="Angenent G.C."/>
        </authorList>
    </citation>
    <scope>SEQUENCE REVISION TO C-TERMINUS</scope>
</reference>
<keyword id="KW-0238">DNA-binding</keyword>
<keyword id="KW-0539">Nucleus</keyword>
<keyword id="KW-0804">Transcription</keyword>
<keyword id="KW-0805">Transcription regulation</keyword>
<accession>Q03489</accession>